<comment type="function">
    <text evidence="8">The pyruvate dehydrogenase complex catalyzes the overall conversion of pyruvate to acetyl-CoA and CO(2).</text>
</comment>
<comment type="catalytic activity">
    <reaction evidence="8">
        <text>N(6)-[(R)-dihydrolipoyl]-L-lysyl-[protein] + acetyl-CoA = N(6)-[(R)-S(8)-acetyldihydrolipoyl]-L-lysyl-[protein] + CoA</text>
        <dbReference type="Rhea" id="RHEA:17017"/>
        <dbReference type="Rhea" id="RHEA-COMP:10475"/>
        <dbReference type="Rhea" id="RHEA-COMP:10478"/>
        <dbReference type="ChEBI" id="CHEBI:57287"/>
        <dbReference type="ChEBI" id="CHEBI:57288"/>
        <dbReference type="ChEBI" id="CHEBI:83100"/>
        <dbReference type="ChEBI" id="CHEBI:83111"/>
        <dbReference type="EC" id="2.3.1.12"/>
    </reaction>
</comment>
<comment type="cofactor">
    <cofactor>
        <name>(R)-lipoate</name>
        <dbReference type="ChEBI" id="CHEBI:83088"/>
    </cofactor>
    <text evidence="7">Binds 1 lipoyl cofactor covalently.</text>
</comment>
<comment type="subunit">
    <text evidence="8">Eukaryotic pyruvate dehydrogenase (PDH) complexes are organized as a core consisting of the oligomeric dihydrolipoamide acetyl-transferase (E2), around which are arranged multiple copies of pyruvate dehydrogenase (E1), dihydrolipoamide dehydrogenase (E3) and protein X (E3BP) bound by non-covalent bonds.</text>
</comment>
<comment type="subcellular location">
    <subcellularLocation>
        <location evidence="5">Mitochondrion matrix</location>
    </subcellularLocation>
</comment>
<comment type="miscellaneous">
    <text>The E2 component contains covalently-bound lipoyl cofactors and it participates in the generation of acetyl groups from hydroxyethyl-thiamine pyrophosphate-E1 and their transfer to coenzyme A.</text>
</comment>
<comment type="miscellaneous">
    <text evidence="6">Present with 5440 molecules/cell in log phase SD medium.</text>
</comment>
<comment type="similarity">
    <text evidence="9">Belongs to the 2-oxoacid dehydrogenase family.</text>
</comment>
<gene>
    <name type="primary">LAT1</name>
    <name type="synonym">ODP2</name>
    <name type="synonym">PDA2</name>
    <name type="ordered locus">YNL071W</name>
    <name type="ORF">N2374</name>
</gene>
<sequence>MSAFVRVVPRISRSSVLTRSLRLQLRCYASYPEHTIIGMPALSPTMTQGNLAAWTKKEGDQLSPGEVIAEIETDKAQMDFEFQEDGYLAKILVPEGTKDIPVNKPIAVYVEDKADVPAFKDFKLEDSGSDSKTSTKAQPAEPQAEKKQEAPAEETKTSAPEAKKSDVAAPQGRIFASPLAKTIALEKGISLKDVHGTGPRGRITKADIESYLEKSSKQSSQTSGAAAATPAAATSSTTAGSAPSPSSTASYEDVPISTMRSIIGERLLQSTQGIPSYIVSSKISISKLLKLRQSLNATANDKYKLSINDLLVKAITVAAKRVPDANAYWLPNENVIRKFKNVDVSVAVATPTGLLTPIVKNCEAKGLSQISNEIKELVKRARINKLAPEEFQGGTICISNMGMNNAVNMFTSIINPPQSTILAIATVERVAVEDAAAENGFSFDNQVTITGTFDHRTIDGAKGAEFMKELKTVIENPLEMLL</sequence>
<name>ODP2_YEAST</name>
<keyword id="KW-0012">Acyltransferase</keyword>
<keyword id="KW-0903">Direct protein sequencing</keyword>
<keyword id="KW-0450">Lipoyl</keyword>
<keyword id="KW-0496">Mitochondrion</keyword>
<keyword id="KW-1185">Reference proteome</keyword>
<keyword id="KW-0808">Transferase</keyword>
<keyword id="KW-0809">Transit peptide</keyword>
<organism>
    <name type="scientific">Saccharomyces cerevisiae (strain ATCC 204508 / S288c)</name>
    <name type="common">Baker's yeast</name>
    <dbReference type="NCBI Taxonomy" id="559292"/>
    <lineage>
        <taxon>Eukaryota</taxon>
        <taxon>Fungi</taxon>
        <taxon>Dikarya</taxon>
        <taxon>Ascomycota</taxon>
        <taxon>Saccharomycotina</taxon>
        <taxon>Saccharomycetes</taxon>
        <taxon>Saccharomycetales</taxon>
        <taxon>Saccharomycetaceae</taxon>
        <taxon>Saccharomyces</taxon>
    </lineage>
</organism>
<reference key="1">
    <citation type="journal article" date="1988" name="Proc. Natl. Acad. Sci. U.S.A.">
        <title>Cloning and nucleotide sequence of the gene for dihydrolipoamide acetyltransferase from Saccharomyces cerevisiae.</title>
        <authorList>
            <person name="Niu X.-D."/>
            <person name="Browning K.S."/>
            <person name="Behal R.H."/>
            <person name="Reed L.J."/>
        </authorList>
    </citation>
    <scope>NUCLEOTIDE SEQUENCE [GENOMIC DNA]</scope>
    <scope>PROTEIN SEQUENCE OF 29-43 AND 148-167</scope>
    <scope>COFACTOR</scope>
    <scope>LIPOYLATION AT LYS-75</scope>
</reference>
<reference key="2">
    <citation type="journal article" date="1996" name="Yeast">
        <title>Sequencing a cosmid clone of Saccharomyces cerevisiae chromosome XIV reveals 12 new open reading frames (ORFs) and an ancient duplication of six ORFs.</title>
        <authorList>
            <person name="Poehlmann R."/>
            <person name="Philippsen P."/>
        </authorList>
    </citation>
    <scope>NUCLEOTIDE SEQUENCE [GENOMIC DNA]</scope>
    <source>
        <strain>ATCC 96604 / S288c / FY1679</strain>
    </source>
</reference>
<reference key="3">
    <citation type="journal article" date="1997" name="Nature">
        <title>The nucleotide sequence of Saccharomyces cerevisiae chromosome XIV and its evolutionary implications.</title>
        <authorList>
            <person name="Philippsen P."/>
            <person name="Kleine K."/>
            <person name="Poehlmann R."/>
            <person name="Duesterhoeft A."/>
            <person name="Hamberg K."/>
            <person name="Hegemann J.H."/>
            <person name="Obermaier B."/>
            <person name="Urrestarazu L.A."/>
            <person name="Aert R."/>
            <person name="Albermann K."/>
            <person name="Altmann R."/>
            <person name="Andre B."/>
            <person name="Baladron V."/>
            <person name="Ballesta J.P.G."/>
            <person name="Becam A.-M."/>
            <person name="Beinhauer J.D."/>
            <person name="Boskovic J."/>
            <person name="Buitrago M.J."/>
            <person name="Bussereau F."/>
            <person name="Coster F."/>
            <person name="Crouzet M."/>
            <person name="D'Angelo M."/>
            <person name="Dal Pero F."/>
            <person name="De Antoni A."/>
            <person name="del Rey F."/>
            <person name="Doignon F."/>
            <person name="Domdey H."/>
            <person name="Dubois E."/>
            <person name="Fiedler T.A."/>
            <person name="Fleig U."/>
            <person name="Floeth M."/>
            <person name="Fritz C."/>
            <person name="Gaillardin C."/>
            <person name="Garcia-Cantalejo J.M."/>
            <person name="Glansdorff N."/>
            <person name="Goffeau A."/>
            <person name="Gueldener U."/>
            <person name="Herbert C.J."/>
            <person name="Heumann K."/>
            <person name="Heuss-Neitzel D."/>
            <person name="Hilbert H."/>
            <person name="Hinni K."/>
            <person name="Iraqui Houssaini I."/>
            <person name="Jacquet M."/>
            <person name="Jimenez A."/>
            <person name="Jonniaux J.-L."/>
            <person name="Karpfinger-Hartl L."/>
            <person name="Lanfranchi G."/>
            <person name="Lepingle A."/>
            <person name="Levesque H."/>
            <person name="Lyck R."/>
            <person name="Maftahi M."/>
            <person name="Mallet L."/>
            <person name="Maurer C.T.C."/>
            <person name="Messenguy F."/>
            <person name="Mewes H.-W."/>
            <person name="Moestl D."/>
            <person name="Nasr F."/>
            <person name="Nicaud J.-M."/>
            <person name="Niedenthal R.K."/>
            <person name="Pandolfo D."/>
            <person name="Pierard A."/>
            <person name="Piravandi E."/>
            <person name="Planta R.J."/>
            <person name="Pohl T.M."/>
            <person name="Purnelle B."/>
            <person name="Rebischung C."/>
            <person name="Remacha M.A."/>
            <person name="Revuelta J.L."/>
            <person name="Rinke M."/>
            <person name="Saiz J.E."/>
            <person name="Sartorello F."/>
            <person name="Scherens B."/>
            <person name="Sen-Gupta M."/>
            <person name="Soler-Mira A."/>
            <person name="Urbanus J.H.M."/>
            <person name="Valle G."/>
            <person name="Van Dyck L."/>
            <person name="Verhasselt P."/>
            <person name="Vierendeels F."/>
            <person name="Vissers S."/>
            <person name="Voet M."/>
            <person name="Volckaert G."/>
            <person name="Wach A."/>
            <person name="Wambutt R."/>
            <person name="Wedler H."/>
            <person name="Zollner A."/>
            <person name="Hani J."/>
        </authorList>
    </citation>
    <scope>NUCLEOTIDE SEQUENCE [LARGE SCALE GENOMIC DNA]</scope>
    <source>
        <strain>ATCC 204508 / S288c</strain>
    </source>
</reference>
<reference key="4">
    <citation type="journal article" date="2014" name="G3 (Bethesda)">
        <title>The reference genome sequence of Saccharomyces cerevisiae: Then and now.</title>
        <authorList>
            <person name="Engel S.R."/>
            <person name="Dietrich F.S."/>
            <person name="Fisk D.G."/>
            <person name="Binkley G."/>
            <person name="Balakrishnan R."/>
            <person name="Costanzo M.C."/>
            <person name="Dwight S.S."/>
            <person name="Hitz B.C."/>
            <person name="Karra K."/>
            <person name="Nash R.S."/>
            <person name="Weng S."/>
            <person name="Wong E.D."/>
            <person name="Lloyd P."/>
            <person name="Skrzypek M.S."/>
            <person name="Miyasato S.R."/>
            <person name="Simison M."/>
            <person name="Cherry J.M."/>
        </authorList>
    </citation>
    <scope>GENOME REANNOTATION</scope>
    <source>
        <strain>ATCC 204508 / S288c</strain>
    </source>
</reference>
<reference key="5">
    <citation type="journal article" date="2007" name="Genome Res.">
        <title>Approaching a complete repository of sequence-verified protein-encoding clones for Saccharomyces cerevisiae.</title>
        <authorList>
            <person name="Hu Y."/>
            <person name="Rolfs A."/>
            <person name="Bhullar B."/>
            <person name="Murthy T.V.S."/>
            <person name="Zhu C."/>
            <person name="Berger M.F."/>
            <person name="Camargo A.A."/>
            <person name="Kelley F."/>
            <person name="McCarron S."/>
            <person name="Jepson D."/>
            <person name="Richardson A."/>
            <person name="Raphael J."/>
            <person name="Moreira D."/>
            <person name="Taycher E."/>
            <person name="Zuo D."/>
            <person name="Mohr S."/>
            <person name="Kane M.F."/>
            <person name="Williamson J."/>
            <person name="Simpson A.J.G."/>
            <person name="Bulyk M.L."/>
            <person name="Harlow E."/>
            <person name="Marsischky G."/>
            <person name="Kolodner R.D."/>
            <person name="LaBaer J."/>
        </authorList>
    </citation>
    <scope>NUCLEOTIDE SEQUENCE [GENOMIC DNA]</scope>
    <source>
        <strain>ATCC 204508 / S288c</strain>
    </source>
</reference>
<reference key="6">
    <citation type="journal article" date="1981" name="Eur. J. Biochem.">
        <title>Pyruvate dehydrogenase complex from baker's yeast. 2. Molecular structure, dissociation, and implications for the origin of mitochondria.</title>
        <authorList>
            <person name="Kresze G.B."/>
            <person name="Ronft H."/>
        </authorList>
    </citation>
    <scope>FUNCTION</scope>
    <scope>SUBUNIT</scope>
</reference>
<reference key="7">
    <citation type="journal article" date="2003" name="Nature">
        <title>Global analysis of protein localization in budding yeast.</title>
        <authorList>
            <person name="Huh W.-K."/>
            <person name="Falvo J.V."/>
            <person name="Gerke L.C."/>
            <person name="Carroll A.S."/>
            <person name="Howson R.W."/>
            <person name="Weissman J.S."/>
            <person name="O'Shea E.K."/>
        </authorList>
    </citation>
    <scope>SUBCELLULAR LOCATION [LARGE SCALE ANALYSIS]</scope>
</reference>
<reference key="8">
    <citation type="journal article" date="2003" name="Nature">
        <title>Global analysis of protein expression in yeast.</title>
        <authorList>
            <person name="Ghaemmaghami S."/>
            <person name="Huh W.-K."/>
            <person name="Bower K."/>
            <person name="Howson R.W."/>
            <person name="Belle A."/>
            <person name="Dephoure N."/>
            <person name="O'Shea E.K."/>
            <person name="Weissman J.S."/>
        </authorList>
    </citation>
    <scope>LEVEL OF PROTEIN EXPRESSION [LARGE SCALE ANALYSIS]</scope>
</reference>
<reference key="9">
    <citation type="journal article" date="2008" name="Mol. Cell. Proteomics">
        <title>A multidimensional chromatography technology for in-depth phosphoproteome analysis.</title>
        <authorList>
            <person name="Albuquerque C.P."/>
            <person name="Smolka M.B."/>
            <person name="Payne S.H."/>
            <person name="Bafna V."/>
            <person name="Eng J."/>
            <person name="Zhou H."/>
        </authorList>
    </citation>
    <scope>IDENTIFICATION BY MASS SPECTROMETRY [LARGE SCALE ANALYSIS]</scope>
</reference>
<dbReference type="EC" id="2.3.1.12" evidence="8"/>
<dbReference type="EMBL" id="J04096">
    <property type="protein sequence ID" value="AAA34385.1"/>
    <property type="molecule type" value="Genomic_DNA"/>
</dbReference>
<dbReference type="EMBL" id="X86470">
    <property type="protein sequence ID" value="CAA60189.1"/>
    <property type="molecule type" value="Genomic_DNA"/>
</dbReference>
<dbReference type="EMBL" id="Z71347">
    <property type="protein sequence ID" value="CAA95945.1"/>
    <property type="molecule type" value="Genomic_DNA"/>
</dbReference>
<dbReference type="EMBL" id="AY693185">
    <property type="protein sequence ID" value="AAT93204.1"/>
    <property type="molecule type" value="Genomic_DNA"/>
</dbReference>
<dbReference type="EMBL" id="BK006947">
    <property type="protein sequence ID" value="DAA10474.1"/>
    <property type="molecule type" value="Genomic_DNA"/>
</dbReference>
<dbReference type="PIR" id="A30198">
    <property type="entry name" value="A30198"/>
</dbReference>
<dbReference type="RefSeq" id="NP_014328.3">
    <property type="nucleotide sequence ID" value="NM_001182909.3"/>
</dbReference>
<dbReference type="SMR" id="P12695"/>
<dbReference type="BioGRID" id="35752">
    <property type="interactions" value="391"/>
</dbReference>
<dbReference type="ComplexPortal" id="CPX-3207">
    <property type="entry name" value="Mitochondrial pyruvate dehydrogenase complex"/>
</dbReference>
<dbReference type="DIP" id="DIP-6782N"/>
<dbReference type="FunCoup" id="P12695">
    <property type="interactions" value="1403"/>
</dbReference>
<dbReference type="IntAct" id="P12695">
    <property type="interactions" value="82"/>
</dbReference>
<dbReference type="MINT" id="P12695"/>
<dbReference type="STRING" id="4932.YNL071W"/>
<dbReference type="GlyGen" id="P12695">
    <property type="glycosylation" value="1 site"/>
</dbReference>
<dbReference type="iPTMnet" id="P12695"/>
<dbReference type="SwissPalm" id="P12695"/>
<dbReference type="PaxDb" id="4932-YNL071W"/>
<dbReference type="PeptideAtlas" id="P12695"/>
<dbReference type="EnsemblFungi" id="YNL071W_mRNA">
    <property type="protein sequence ID" value="YNL071W"/>
    <property type="gene ID" value="YNL071W"/>
</dbReference>
<dbReference type="GeneID" id="855653"/>
<dbReference type="KEGG" id="sce:YNL071W"/>
<dbReference type="AGR" id="SGD:S000005015"/>
<dbReference type="SGD" id="S000005015">
    <property type="gene designation" value="LAT1"/>
</dbReference>
<dbReference type="VEuPathDB" id="FungiDB:YNL071W"/>
<dbReference type="eggNOG" id="KOG0557">
    <property type="taxonomic scope" value="Eukaryota"/>
</dbReference>
<dbReference type="GeneTree" id="ENSGT00940000154943"/>
<dbReference type="HOGENOM" id="CLU_016733_10_2_1"/>
<dbReference type="InParanoid" id="P12695"/>
<dbReference type="OMA" id="TMEFESF"/>
<dbReference type="OrthoDB" id="537444at2759"/>
<dbReference type="BioCyc" id="YEAST:YNL071W-MONOMER"/>
<dbReference type="Reactome" id="R-SCE-9857492">
    <property type="pathway name" value="Protein lipoylation"/>
</dbReference>
<dbReference type="Reactome" id="R-SCE-9861559">
    <property type="pathway name" value="PDH complex synthesizes acetyl-CoA from PYR"/>
</dbReference>
<dbReference type="BioGRID-ORCS" id="855653">
    <property type="hits" value="6 hits in 10 CRISPR screens"/>
</dbReference>
<dbReference type="PRO" id="PR:P12695"/>
<dbReference type="Proteomes" id="UP000002311">
    <property type="component" value="Chromosome XIV"/>
</dbReference>
<dbReference type="RNAct" id="P12695">
    <property type="molecule type" value="protein"/>
</dbReference>
<dbReference type="GO" id="GO:0005759">
    <property type="term" value="C:mitochondrial matrix"/>
    <property type="evidence" value="ECO:0007669"/>
    <property type="project" value="UniProtKB-SubCell"/>
</dbReference>
<dbReference type="GO" id="GO:0005739">
    <property type="term" value="C:mitochondrion"/>
    <property type="evidence" value="ECO:0000314"/>
    <property type="project" value="ComplexPortal"/>
</dbReference>
<dbReference type="GO" id="GO:0045254">
    <property type="term" value="C:pyruvate dehydrogenase complex"/>
    <property type="evidence" value="ECO:0000314"/>
    <property type="project" value="SGD"/>
</dbReference>
<dbReference type="GO" id="GO:0004742">
    <property type="term" value="F:dihydrolipoyllysine-residue acetyltransferase activity"/>
    <property type="evidence" value="ECO:0000314"/>
    <property type="project" value="SGD"/>
</dbReference>
<dbReference type="GO" id="GO:0006086">
    <property type="term" value="P:pyruvate decarboxylation to acetyl-CoA"/>
    <property type="evidence" value="ECO:0000314"/>
    <property type="project" value="SGD"/>
</dbReference>
<dbReference type="CDD" id="cd06849">
    <property type="entry name" value="lipoyl_domain"/>
    <property type="match status" value="1"/>
</dbReference>
<dbReference type="FunFam" id="2.40.50.100:FF:000010">
    <property type="entry name" value="Acetyltransferase component of pyruvate dehydrogenase complex"/>
    <property type="match status" value="1"/>
</dbReference>
<dbReference type="FunFam" id="3.30.559.10:FF:000003">
    <property type="entry name" value="Acetyltransferase component of pyruvate dehydrogenase complex"/>
    <property type="match status" value="1"/>
</dbReference>
<dbReference type="FunFam" id="4.10.320.10:FF:000005">
    <property type="entry name" value="Acetyltransferase component of pyruvate dehydrogenase complex"/>
    <property type="match status" value="1"/>
</dbReference>
<dbReference type="Gene3D" id="2.40.50.100">
    <property type="match status" value="1"/>
</dbReference>
<dbReference type="Gene3D" id="3.30.559.10">
    <property type="entry name" value="Chloramphenicol acetyltransferase-like domain"/>
    <property type="match status" value="1"/>
</dbReference>
<dbReference type="Gene3D" id="4.10.320.10">
    <property type="entry name" value="E3-binding domain"/>
    <property type="match status" value="1"/>
</dbReference>
<dbReference type="InterPro" id="IPR003016">
    <property type="entry name" value="2-oxoA_DH_lipoyl-BS"/>
</dbReference>
<dbReference type="InterPro" id="IPR001078">
    <property type="entry name" value="2-oxoacid_DH_actylTfrase"/>
</dbReference>
<dbReference type="InterPro" id="IPR000089">
    <property type="entry name" value="Biotin_lipoyl"/>
</dbReference>
<dbReference type="InterPro" id="IPR023213">
    <property type="entry name" value="CAT-like_dom_sf"/>
</dbReference>
<dbReference type="InterPro" id="IPR045257">
    <property type="entry name" value="E2/Pdx1"/>
</dbReference>
<dbReference type="InterPro" id="IPR036625">
    <property type="entry name" value="E3-bd_dom_sf"/>
</dbReference>
<dbReference type="InterPro" id="IPR006257">
    <property type="entry name" value="LAT1"/>
</dbReference>
<dbReference type="InterPro" id="IPR004167">
    <property type="entry name" value="PSBD"/>
</dbReference>
<dbReference type="InterPro" id="IPR011053">
    <property type="entry name" value="Single_hybrid_motif"/>
</dbReference>
<dbReference type="NCBIfam" id="TIGR01349">
    <property type="entry name" value="PDHac_trf_mito"/>
    <property type="match status" value="1"/>
</dbReference>
<dbReference type="PANTHER" id="PTHR23151">
    <property type="entry name" value="DIHYDROLIPOAMIDE ACETYL/SUCCINYL-TRANSFERASE-RELATED"/>
    <property type="match status" value="1"/>
</dbReference>
<dbReference type="PANTHER" id="PTHR23151:SF90">
    <property type="entry name" value="DIHYDROLIPOYLLYSINE-RESIDUE ACETYLTRANSFERASE COMPONENT OF PYRUVATE DEHYDROGENASE COMPLEX, MITOCHONDRIAL-RELATED"/>
    <property type="match status" value="1"/>
</dbReference>
<dbReference type="Pfam" id="PF00198">
    <property type="entry name" value="2-oxoacid_dh"/>
    <property type="match status" value="1"/>
</dbReference>
<dbReference type="Pfam" id="PF00364">
    <property type="entry name" value="Biotin_lipoyl"/>
    <property type="match status" value="1"/>
</dbReference>
<dbReference type="Pfam" id="PF02817">
    <property type="entry name" value="E3_binding"/>
    <property type="match status" value="1"/>
</dbReference>
<dbReference type="SUPFAM" id="SSF52777">
    <property type="entry name" value="CoA-dependent acyltransferases"/>
    <property type="match status" value="1"/>
</dbReference>
<dbReference type="SUPFAM" id="SSF47005">
    <property type="entry name" value="Peripheral subunit-binding domain of 2-oxo acid dehydrogenase complex"/>
    <property type="match status" value="1"/>
</dbReference>
<dbReference type="SUPFAM" id="SSF51230">
    <property type="entry name" value="Single hybrid motif"/>
    <property type="match status" value="1"/>
</dbReference>
<dbReference type="PROSITE" id="PS50968">
    <property type="entry name" value="BIOTINYL_LIPOYL"/>
    <property type="match status" value="1"/>
</dbReference>
<dbReference type="PROSITE" id="PS00189">
    <property type="entry name" value="LIPOYL"/>
    <property type="match status" value="1"/>
</dbReference>
<dbReference type="PROSITE" id="PS51826">
    <property type="entry name" value="PSBD"/>
    <property type="match status" value="1"/>
</dbReference>
<feature type="transit peptide" description="Mitochondrion" evidence="7">
    <location>
        <begin position="1"/>
        <end position="28"/>
    </location>
</feature>
<feature type="chain" id="PRO_0000020483" description="Dihydrolipoyllysine-residue acetyltransferase component of pyruvate dehydrogenase complex, mitochondrial">
    <location>
        <begin position="29"/>
        <end position="482"/>
    </location>
</feature>
<feature type="domain" description="Lipoyl-binding" evidence="2">
    <location>
        <begin position="34"/>
        <end position="110"/>
    </location>
</feature>
<feature type="domain" description="Peripheral subunit-binding (PSBD)" evidence="3">
    <location>
        <begin position="175"/>
        <end position="212"/>
    </location>
</feature>
<feature type="region of interest" description="Disordered" evidence="4">
    <location>
        <begin position="122"/>
        <end position="170"/>
    </location>
</feature>
<feature type="region of interest" description="Disordered" evidence="4">
    <location>
        <begin position="214"/>
        <end position="251"/>
    </location>
</feature>
<feature type="compositionally biased region" description="Basic and acidic residues" evidence="4">
    <location>
        <begin position="143"/>
        <end position="166"/>
    </location>
</feature>
<feature type="compositionally biased region" description="Low complexity" evidence="4">
    <location>
        <begin position="217"/>
        <end position="250"/>
    </location>
</feature>
<feature type="active site" evidence="1">
    <location>
        <position position="455"/>
    </location>
</feature>
<feature type="active site" evidence="1">
    <location>
        <position position="459"/>
    </location>
</feature>
<feature type="modified residue" description="N6-lipoyllysine" evidence="2 10">
    <location>
        <position position="75"/>
    </location>
</feature>
<evidence type="ECO:0000255" key="1"/>
<evidence type="ECO:0000255" key="2">
    <source>
        <dbReference type="PROSITE-ProRule" id="PRU01066"/>
    </source>
</evidence>
<evidence type="ECO:0000255" key="3">
    <source>
        <dbReference type="PROSITE-ProRule" id="PRU01170"/>
    </source>
</evidence>
<evidence type="ECO:0000256" key="4">
    <source>
        <dbReference type="SAM" id="MobiDB-lite"/>
    </source>
</evidence>
<evidence type="ECO:0000269" key="5">
    <source>
    </source>
</evidence>
<evidence type="ECO:0000269" key="6">
    <source>
    </source>
</evidence>
<evidence type="ECO:0000269" key="7">
    <source>
    </source>
</evidence>
<evidence type="ECO:0000269" key="8">
    <source>
    </source>
</evidence>
<evidence type="ECO:0000305" key="9"/>
<evidence type="ECO:0000305" key="10">
    <source>
    </source>
</evidence>
<accession>P12695</accession>
<accession>D6W1A8</accession>
<proteinExistence type="evidence at protein level"/>
<protein>
    <recommendedName>
        <fullName>Dihydrolipoyllysine-residue acetyltransferase component of pyruvate dehydrogenase complex, mitochondrial</fullName>
        <ecNumber evidence="8">2.3.1.12</ecNumber>
    </recommendedName>
    <alternativeName>
        <fullName>Dihydrolipoamide acetyltransferase component of pyruvate dehydrogenase complex</fullName>
    </alternativeName>
    <alternativeName>
        <fullName>Pyruvate dehydrogenase complex component E2</fullName>
        <shortName>PDC-E2</shortName>
        <shortName>PDCE2</shortName>
    </alternativeName>
</protein>